<accession>P46616</accession>
<feature type="chain" id="PRO_0000068997" description="Adenosine receptor A2a">
    <location>
        <begin position="1"/>
        <end position="409"/>
    </location>
</feature>
<feature type="topological domain" description="Extracellular" evidence="1">
    <location>
        <begin position="1"/>
        <end position="4"/>
    </location>
</feature>
<feature type="transmembrane region" description="Helical; Name=1" evidence="1">
    <location>
        <begin position="5"/>
        <end position="29"/>
    </location>
</feature>
<feature type="topological domain" description="Cytoplasmic" evidence="1">
    <location>
        <begin position="30"/>
        <end position="39"/>
    </location>
</feature>
<feature type="transmembrane region" description="Helical; Name=2" evidence="1">
    <location>
        <begin position="40"/>
        <end position="63"/>
    </location>
</feature>
<feature type="topological domain" description="Extracellular" evidence="1">
    <location>
        <begin position="64"/>
        <end position="74"/>
    </location>
</feature>
<feature type="transmembrane region" description="Helical; Name=3" evidence="1">
    <location>
        <begin position="75"/>
        <end position="97"/>
    </location>
</feature>
<feature type="topological domain" description="Cytoplasmic" evidence="1">
    <location>
        <begin position="98"/>
        <end position="117"/>
    </location>
</feature>
<feature type="transmembrane region" description="Helical; Name=4" evidence="1">
    <location>
        <begin position="118"/>
        <end position="140"/>
    </location>
</feature>
<feature type="topological domain" description="Extracellular" evidence="1">
    <location>
        <begin position="141"/>
        <end position="170"/>
    </location>
</feature>
<feature type="transmembrane region" description="Helical; Name=5" evidence="1">
    <location>
        <begin position="171"/>
        <end position="195"/>
    </location>
</feature>
<feature type="topological domain" description="Cytoplasmic" evidence="1">
    <location>
        <begin position="196"/>
        <end position="231"/>
    </location>
</feature>
<feature type="transmembrane region" description="Helical; Name=6" evidence="1">
    <location>
        <begin position="232"/>
        <end position="255"/>
    </location>
</feature>
<feature type="topological domain" description="Extracellular" evidence="1">
    <location>
        <begin position="256"/>
        <end position="263"/>
    </location>
</feature>
<feature type="transmembrane region" description="Helical; Name=7" evidence="1">
    <location>
        <begin position="264"/>
        <end position="287"/>
    </location>
</feature>
<feature type="topological domain" description="Cytoplasmic" evidence="1">
    <location>
        <begin position="288"/>
        <end position="409"/>
    </location>
</feature>
<feature type="region of interest" description="Disordered" evidence="7">
    <location>
        <begin position="316"/>
        <end position="336"/>
    </location>
</feature>
<feature type="region of interest" description="Disordered" evidence="7">
    <location>
        <begin position="369"/>
        <end position="409"/>
    </location>
</feature>
<feature type="binding site" evidence="3">
    <location>
        <position position="166"/>
    </location>
    <ligand>
        <name>adenosine</name>
        <dbReference type="ChEBI" id="CHEBI:16335"/>
        <note>agonist</note>
    </ligand>
</feature>
<feature type="binding site" evidence="3">
    <location>
        <position position="250"/>
    </location>
    <ligand>
        <name>adenosine</name>
        <dbReference type="ChEBI" id="CHEBI:16335"/>
        <note>agonist</note>
    </ligand>
</feature>
<feature type="binding site" evidence="3">
    <location>
        <position position="274"/>
    </location>
    <ligand>
        <name>adenosine</name>
        <dbReference type="ChEBI" id="CHEBI:16335"/>
        <note>agonist</note>
    </ligand>
</feature>
<feature type="binding site" evidence="3">
    <location>
        <position position="275"/>
    </location>
    <ligand>
        <name>adenosine</name>
        <dbReference type="ChEBI" id="CHEBI:16335"/>
        <note>agonist</note>
    </ligand>
</feature>
<feature type="glycosylation site" description="N-linked (GlcNAc...) asparagine" evidence="5">
    <location>
        <position position="142"/>
    </location>
</feature>
<feature type="glycosylation site" description="N-linked (GlcNAc...) asparagine" evidence="5">
    <location>
        <position position="151"/>
    </location>
</feature>
<feature type="disulfide bond" evidence="6">
    <location>
        <begin position="68"/>
        <end position="156"/>
    </location>
</feature>
<feature type="disulfide bond" evidence="6">
    <location>
        <begin position="71"/>
        <end position="143"/>
    </location>
</feature>
<feature type="disulfide bond" evidence="6">
    <location>
        <begin position="74"/>
        <end position="163"/>
    </location>
</feature>
<feature type="disulfide bond" evidence="6">
    <location>
        <begin position="256"/>
        <end position="259"/>
    </location>
</feature>
<feature type="sequence conflict" description="In Ref. 2." evidence="8" ref="2">
    <original>T</original>
    <variation>A</variation>
    <location>
        <position position="94"/>
    </location>
</feature>
<feature type="sequence conflict" description="In Ref. 2." evidence="8" ref="2">
    <original>T</original>
    <variation>A</variation>
    <location>
        <position position="96"/>
    </location>
</feature>
<feature type="sequence conflict" description="In Ref. 2; AAA18421." evidence="8" ref="2">
    <original>P</original>
    <variation>A</variation>
    <location>
        <position position="228"/>
    </location>
</feature>
<feature type="sequence conflict" description="In Ref. 2; AAA18421." evidence="8" ref="2">
    <original>C</original>
    <variation>W</variation>
    <location>
        <position position="243"/>
    </location>
</feature>
<feature type="sequence conflict" description="In Ref. 2; AAA18421." evidence="8" ref="2">
    <original>N</original>
    <variation>H</variation>
    <location>
        <position position="247"/>
    </location>
</feature>
<feature type="sequence conflict" description="In Ref. 2; AAA18421." evidence="8" ref="2">
    <original>D</original>
    <variation>G</variation>
    <location>
        <position position="260"/>
    </location>
</feature>
<feature type="sequence conflict" description="In Ref. 2; AAA18421." evidence="8" ref="2">
    <original>YL</original>
    <variation>SM</variation>
    <location>
        <begin position="268"/>
        <end position="269"/>
    </location>
</feature>
<feature type="sequence conflict" description="In Ref. 2; AAA18421." evidence="8" ref="2">
    <original>L</original>
    <variation>P</variation>
    <location>
        <position position="349"/>
    </location>
</feature>
<comment type="function">
    <text evidence="2">Receptor for adenosine (By similarity). The activity of this receptor is mediated by G proteins which activate adenylyl cyclase (By similarity).</text>
</comment>
<comment type="subunit">
    <text evidence="3 4">Interacts (via cytoplasmic C-terminal domain) with USP4; the interaction is direct (By similarity). May interact with DRD4 (By similarity). Interacts with NECAB2 (By similarity). Interacts (via cytoplasmic C-terminal domain) with GAS2L2; interaction enhances receptor-mediated adenylyl cyclase activity (By similarity).</text>
</comment>
<comment type="subcellular location">
    <subcellularLocation>
        <location evidence="4">Cell membrane</location>
        <topology evidence="4">Multi-pass membrane protein</topology>
    </subcellularLocation>
    <text evidence="4">Colocalizes with GAS2L2 at neuronal processes.</text>
</comment>
<comment type="domain">
    <text evidence="1">The cytoplasmic C-terminal domain is necessary for targeting the non-ubiquitinated form of this protein to the cell surface.</text>
</comment>
<comment type="PTM">
    <text evidence="1">Ubiquitinated. Deubiquitinated by USP4; leading to stabilization and expression at the cell surface (By similarity).</text>
</comment>
<comment type="similarity">
    <text evidence="6">Belongs to the G-protein coupled receptor 1 family.</text>
</comment>
<gene>
    <name type="primary">ADORA2A</name>
</gene>
<proteinExistence type="evidence at transcript level"/>
<evidence type="ECO:0000250" key="1"/>
<evidence type="ECO:0000250" key="2">
    <source>
        <dbReference type="UniProtKB" id="P11617"/>
    </source>
</evidence>
<evidence type="ECO:0000250" key="3">
    <source>
        <dbReference type="UniProtKB" id="P29274"/>
    </source>
</evidence>
<evidence type="ECO:0000250" key="4">
    <source>
        <dbReference type="UniProtKB" id="P30543"/>
    </source>
</evidence>
<evidence type="ECO:0000255" key="5"/>
<evidence type="ECO:0000255" key="6">
    <source>
        <dbReference type="PROSITE-ProRule" id="PRU00521"/>
    </source>
</evidence>
<evidence type="ECO:0000256" key="7">
    <source>
        <dbReference type="SAM" id="MobiDB-lite"/>
    </source>
</evidence>
<evidence type="ECO:0000305" key="8"/>
<sequence>MSSSVYITVELVIAVLAILGNVLVCWAVWINSNLQNVTNYFVVSLAAADIAVGVLAIPFAITISTGFCAACHGCLFFACFVLVLTQSSIFSLLTITIDRYIAIRIPLRYNGLVTCTRAKGIIAICWVLSFAIGLTPMLGWNNCSQPKGDKNHSESCDEGQVTCLFEDVVPMNYMVYYNFFAFVLVPLLLMLGIYLRIFLAARRQLKQMESQPLPGERTRSTLQKEVHPAKSLAIIVGLFALCCLPLNIINCFTFFCPECDHAPPWLMYLTIILSHGNSVVNPLIYAYRIREFRQTFRKIIRSHILRRRELFKAGGTSARASAAHSPEGEQVSLRLNGHPPGVWANGSALRPEQRPNGYVLGLVSGRSAQRSHGDASLSDVELLSHEHKGTCPESPSLEDPPAHGGAGVS</sequence>
<keyword id="KW-1003">Cell membrane</keyword>
<keyword id="KW-1015">Disulfide bond</keyword>
<keyword id="KW-0297">G-protein coupled receptor</keyword>
<keyword id="KW-0325">Glycoprotein</keyword>
<keyword id="KW-0472">Membrane</keyword>
<keyword id="KW-0675">Receptor</keyword>
<keyword id="KW-1185">Reference proteome</keyword>
<keyword id="KW-0807">Transducer</keyword>
<keyword id="KW-0812">Transmembrane</keyword>
<keyword id="KW-1133">Transmembrane helix</keyword>
<keyword id="KW-0832">Ubl conjugation</keyword>
<reference key="1">
    <citation type="journal article" date="1996" name="Biochem. J.">
        <title>Functional coupling of adenosine A2a receptor to inhibition of the mitogen-activated protein kinase cascade in Chinese hamster ovary cells.</title>
        <authorList>
            <person name="Hirano D."/>
            <person name="Ogasawara H."/>
            <person name="Kodama H."/>
            <person name="Waga I."/>
            <person name="Sakanaka C."/>
            <person name="Shimizu T."/>
            <person name="Nakamura M."/>
        </authorList>
    </citation>
    <scope>NUCLEOTIDE SEQUENCE [MRNA]</scope>
    <source>
        <strain>Hartley</strain>
        <tissue>Leukocyte</tissue>
    </source>
</reference>
<reference key="2">
    <citation type="journal article" date="1994" name="Neurochem. Res.">
        <title>Cloning and expression of the A2a adenosine receptor from guinea pig brain.</title>
        <authorList>
            <person name="Meng F."/>
            <person name="Xie G.X."/>
            <person name="Chalmers D."/>
            <person name="Morgan C."/>
            <person name="Watson S.J."/>
            <person name="Akil H."/>
        </authorList>
    </citation>
    <scope>NUCLEOTIDE SEQUENCE [MRNA]</scope>
    <source>
        <strain>Hartley</strain>
        <tissue>Brain</tissue>
    </source>
</reference>
<name>AA2AR_CAVPO</name>
<organism>
    <name type="scientific">Cavia porcellus</name>
    <name type="common">Guinea pig</name>
    <dbReference type="NCBI Taxonomy" id="10141"/>
    <lineage>
        <taxon>Eukaryota</taxon>
        <taxon>Metazoa</taxon>
        <taxon>Chordata</taxon>
        <taxon>Craniata</taxon>
        <taxon>Vertebrata</taxon>
        <taxon>Euteleostomi</taxon>
        <taxon>Mammalia</taxon>
        <taxon>Eutheria</taxon>
        <taxon>Euarchontoglires</taxon>
        <taxon>Glires</taxon>
        <taxon>Rodentia</taxon>
        <taxon>Hystricomorpha</taxon>
        <taxon>Caviidae</taxon>
        <taxon>Cavia</taxon>
    </lineage>
</organism>
<protein>
    <recommendedName>
        <fullName>Adenosine receptor A2a</fullName>
    </recommendedName>
</protein>
<dbReference type="EMBL" id="D63674">
    <property type="protein sequence ID" value="BAA09825.1"/>
    <property type="molecule type" value="mRNA"/>
</dbReference>
<dbReference type="EMBL" id="U04201">
    <property type="protein sequence ID" value="AAA18421.1"/>
    <property type="molecule type" value="mRNA"/>
</dbReference>
<dbReference type="PIR" id="I48095">
    <property type="entry name" value="I48095"/>
</dbReference>
<dbReference type="PIR" id="S68247">
    <property type="entry name" value="S68247"/>
</dbReference>
<dbReference type="RefSeq" id="NP_001166204.1">
    <property type="nucleotide sequence ID" value="NM_001172733.1"/>
</dbReference>
<dbReference type="SMR" id="P46616"/>
<dbReference type="FunCoup" id="P46616">
    <property type="interactions" value="855"/>
</dbReference>
<dbReference type="STRING" id="10141.ENSCPOP00000021389"/>
<dbReference type="BindingDB" id="P46616"/>
<dbReference type="ChEMBL" id="CHEMBL2605"/>
<dbReference type="DrugCentral" id="P46616"/>
<dbReference type="GlyCosmos" id="P46616">
    <property type="glycosylation" value="2 sites, No reported glycans"/>
</dbReference>
<dbReference type="GeneID" id="100135473"/>
<dbReference type="KEGG" id="cpoc:100135473"/>
<dbReference type="CTD" id="135"/>
<dbReference type="eggNOG" id="KOG3656">
    <property type="taxonomic scope" value="Eukaryota"/>
</dbReference>
<dbReference type="InParanoid" id="P46616"/>
<dbReference type="OrthoDB" id="9445642at2759"/>
<dbReference type="PRO" id="PR:P46616"/>
<dbReference type="Proteomes" id="UP000005447">
    <property type="component" value="Unassembled WGS sequence"/>
</dbReference>
<dbReference type="GO" id="GO:0005886">
    <property type="term" value="C:plasma membrane"/>
    <property type="evidence" value="ECO:0007669"/>
    <property type="project" value="UniProtKB-SubCell"/>
</dbReference>
<dbReference type="GO" id="GO:0001609">
    <property type="term" value="F:G protein-coupled adenosine receptor activity"/>
    <property type="evidence" value="ECO:0007669"/>
    <property type="project" value="InterPro"/>
</dbReference>
<dbReference type="GO" id="GO:0007189">
    <property type="term" value="P:adenylate cyclase-activating G protein-coupled receptor signaling pathway"/>
    <property type="evidence" value="ECO:0007669"/>
    <property type="project" value="TreeGrafter"/>
</dbReference>
<dbReference type="GO" id="GO:0010646">
    <property type="term" value="P:regulation of cell communication"/>
    <property type="evidence" value="ECO:0007669"/>
    <property type="project" value="UniProtKB-ARBA"/>
</dbReference>
<dbReference type="GO" id="GO:0023051">
    <property type="term" value="P:regulation of signaling"/>
    <property type="evidence" value="ECO:0007669"/>
    <property type="project" value="UniProtKB-ARBA"/>
</dbReference>
<dbReference type="CDD" id="cd15068">
    <property type="entry name" value="7tmA_Adenosine_R_A2A"/>
    <property type="match status" value="1"/>
</dbReference>
<dbReference type="FunFam" id="1.20.1070.10:FF:000061">
    <property type="entry name" value="Adenosine receptor A2"/>
    <property type="match status" value="1"/>
</dbReference>
<dbReference type="Gene3D" id="1.20.1070.10">
    <property type="entry name" value="Rhodopsin 7-helix transmembrane proteins"/>
    <property type="match status" value="1"/>
</dbReference>
<dbReference type="InterPro" id="IPR001513">
    <property type="entry name" value="Adeno_A2A_rcpt"/>
</dbReference>
<dbReference type="InterPro" id="IPR001634">
    <property type="entry name" value="Adenosn_rcpt"/>
</dbReference>
<dbReference type="InterPro" id="IPR000276">
    <property type="entry name" value="GPCR_Rhodpsn"/>
</dbReference>
<dbReference type="InterPro" id="IPR017452">
    <property type="entry name" value="GPCR_Rhodpsn_7TM"/>
</dbReference>
<dbReference type="PANTHER" id="PTHR24246:SF47">
    <property type="entry name" value="ADENOSINE RECEPTOR A2A"/>
    <property type="match status" value="1"/>
</dbReference>
<dbReference type="PANTHER" id="PTHR24246">
    <property type="entry name" value="OLFACTORY RECEPTOR AND ADENOSINE RECEPTOR"/>
    <property type="match status" value="1"/>
</dbReference>
<dbReference type="Pfam" id="PF00001">
    <property type="entry name" value="7tm_1"/>
    <property type="match status" value="1"/>
</dbReference>
<dbReference type="PRINTS" id="PR00553">
    <property type="entry name" value="ADENOSINA2AR"/>
</dbReference>
<dbReference type="PRINTS" id="PR00424">
    <property type="entry name" value="ADENOSINER"/>
</dbReference>
<dbReference type="PRINTS" id="PR00237">
    <property type="entry name" value="GPCRRHODOPSN"/>
</dbReference>
<dbReference type="SMART" id="SM01381">
    <property type="entry name" value="7TM_GPCR_Srsx"/>
    <property type="match status" value="1"/>
</dbReference>
<dbReference type="SUPFAM" id="SSF81321">
    <property type="entry name" value="Family A G protein-coupled receptor-like"/>
    <property type="match status" value="1"/>
</dbReference>
<dbReference type="PROSITE" id="PS00237">
    <property type="entry name" value="G_PROTEIN_RECEP_F1_1"/>
    <property type="match status" value="1"/>
</dbReference>
<dbReference type="PROSITE" id="PS50262">
    <property type="entry name" value="G_PROTEIN_RECEP_F1_2"/>
    <property type="match status" value="1"/>
</dbReference>